<sequence>MQSKEDFIEMRVPASAEYVSLIRLTLSGVFSRAGATYDDIEDAKIAVSEAVTNAVKHAYKENNNVGIINIYFEILEDKIKIVISDKGDSFDYETTKSKIGPYDKDENIDFLREGGLGLFLIESLMDEVTVYKESGVTISMTKYIKKEQVRNNGERVEIS</sequence>
<protein>
    <recommendedName>
        <fullName evidence="1">Serine-protein kinase RsbW</fullName>
        <ecNumber evidence="1">2.7.11.1</ecNumber>
    </recommendedName>
    <alternativeName>
        <fullName evidence="1">Anti-sigma-B factor</fullName>
    </alternativeName>
    <alternativeName>
        <fullName evidence="1">Sigma-B negative effector RsbW</fullName>
    </alternativeName>
</protein>
<accession>A8Z4W8</accession>
<gene>
    <name evidence="1" type="primary">rsbW</name>
    <name type="ordered locus">USA300HOU_2060</name>
</gene>
<name>RSBW_STAAT</name>
<feature type="chain" id="PRO_1000082674" description="Serine-protein kinase RsbW">
    <location>
        <begin position="1"/>
        <end position="159"/>
    </location>
</feature>
<proteinExistence type="inferred from homology"/>
<evidence type="ECO:0000255" key="1">
    <source>
        <dbReference type="HAMAP-Rule" id="MF_00638"/>
    </source>
</evidence>
<comment type="function">
    <text evidence="1">Negative regulator of sigma-B activity. Phosphorylates and inactivates its specific antagonist protein, RsbV. Upon phosphorylation of RsbV, RsbW is released and binds to sigma-B, thereby blocking its ability to form an RNA polymerase holoenzyme (E-sigma-B).</text>
</comment>
<comment type="catalytic activity">
    <reaction evidence="1">
        <text>L-seryl-[protein] + ATP = O-phospho-L-seryl-[protein] + ADP + H(+)</text>
        <dbReference type="Rhea" id="RHEA:17989"/>
        <dbReference type="Rhea" id="RHEA-COMP:9863"/>
        <dbReference type="Rhea" id="RHEA-COMP:11604"/>
        <dbReference type="ChEBI" id="CHEBI:15378"/>
        <dbReference type="ChEBI" id="CHEBI:29999"/>
        <dbReference type="ChEBI" id="CHEBI:30616"/>
        <dbReference type="ChEBI" id="CHEBI:83421"/>
        <dbReference type="ChEBI" id="CHEBI:456216"/>
        <dbReference type="EC" id="2.7.11.1"/>
    </reaction>
</comment>
<comment type="catalytic activity">
    <reaction evidence="1">
        <text>L-threonyl-[protein] + ATP = O-phospho-L-threonyl-[protein] + ADP + H(+)</text>
        <dbReference type="Rhea" id="RHEA:46608"/>
        <dbReference type="Rhea" id="RHEA-COMP:11060"/>
        <dbReference type="Rhea" id="RHEA-COMP:11605"/>
        <dbReference type="ChEBI" id="CHEBI:15378"/>
        <dbReference type="ChEBI" id="CHEBI:30013"/>
        <dbReference type="ChEBI" id="CHEBI:30616"/>
        <dbReference type="ChEBI" id="CHEBI:61977"/>
        <dbReference type="ChEBI" id="CHEBI:456216"/>
        <dbReference type="EC" id="2.7.11.1"/>
    </reaction>
</comment>
<comment type="similarity">
    <text evidence="1">Belongs to the anti-sigma-factor family.</text>
</comment>
<reference key="1">
    <citation type="journal article" date="2007" name="BMC Microbiol.">
        <title>Subtle genetic changes enhance virulence of methicillin resistant and sensitive Staphylococcus aureus.</title>
        <authorList>
            <person name="Highlander S.K."/>
            <person name="Hulten K.G."/>
            <person name="Qin X."/>
            <person name="Jiang H."/>
            <person name="Yerrapragada S."/>
            <person name="Mason E.O. Jr."/>
            <person name="Shang Y."/>
            <person name="Williams T.M."/>
            <person name="Fortunov R.M."/>
            <person name="Liu Y."/>
            <person name="Igboeli O."/>
            <person name="Petrosino J."/>
            <person name="Tirumalai M."/>
            <person name="Uzman A."/>
            <person name="Fox G.E."/>
            <person name="Cardenas A.M."/>
            <person name="Muzny D.M."/>
            <person name="Hemphill L."/>
            <person name="Ding Y."/>
            <person name="Dugan S."/>
            <person name="Blyth P.R."/>
            <person name="Buhay C.J."/>
            <person name="Dinh H.H."/>
            <person name="Hawes A.C."/>
            <person name="Holder M."/>
            <person name="Kovar C.L."/>
            <person name="Lee S.L."/>
            <person name="Liu W."/>
            <person name="Nazareth L.V."/>
            <person name="Wang Q."/>
            <person name="Zhou J."/>
            <person name="Kaplan S.L."/>
            <person name="Weinstock G.M."/>
        </authorList>
    </citation>
    <scope>NUCLEOTIDE SEQUENCE [LARGE SCALE GENOMIC DNA]</scope>
    <source>
        <strain>USA300 / TCH1516</strain>
    </source>
</reference>
<dbReference type="EC" id="2.7.11.1" evidence="1"/>
<dbReference type="EMBL" id="CP000730">
    <property type="protein sequence ID" value="ABX30057.1"/>
    <property type="molecule type" value="Genomic_DNA"/>
</dbReference>
<dbReference type="RefSeq" id="WP_001190829.1">
    <property type="nucleotide sequence ID" value="NC_010079.1"/>
</dbReference>
<dbReference type="SMR" id="A8Z4W8"/>
<dbReference type="KEGG" id="sax:USA300HOU_2060"/>
<dbReference type="HOGENOM" id="CLU_090336_11_1_9"/>
<dbReference type="GO" id="GO:0005524">
    <property type="term" value="F:ATP binding"/>
    <property type="evidence" value="ECO:0007669"/>
    <property type="project" value="UniProtKB-KW"/>
</dbReference>
<dbReference type="GO" id="GO:0106310">
    <property type="term" value="F:protein serine kinase activity"/>
    <property type="evidence" value="ECO:0007669"/>
    <property type="project" value="RHEA"/>
</dbReference>
<dbReference type="GO" id="GO:0004674">
    <property type="term" value="F:protein serine/threonine kinase activity"/>
    <property type="evidence" value="ECO:0007669"/>
    <property type="project" value="UniProtKB-KW"/>
</dbReference>
<dbReference type="GO" id="GO:0016989">
    <property type="term" value="F:sigma factor antagonist activity"/>
    <property type="evidence" value="ECO:0007669"/>
    <property type="project" value="InterPro"/>
</dbReference>
<dbReference type="CDD" id="cd16936">
    <property type="entry name" value="HATPase_RsbW-like"/>
    <property type="match status" value="1"/>
</dbReference>
<dbReference type="Gene3D" id="3.30.565.10">
    <property type="entry name" value="Histidine kinase-like ATPase, C-terminal domain"/>
    <property type="match status" value="1"/>
</dbReference>
<dbReference type="HAMAP" id="MF_00638">
    <property type="entry name" value="Anti_sigma_B"/>
    <property type="match status" value="1"/>
</dbReference>
<dbReference type="InterPro" id="IPR050267">
    <property type="entry name" value="Anti-sigma-factor_SerPK"/>
</dbReference>
<dbReference type="InterPro" id="IPR036890">
    <property type="entry name" value="HATPase_C_sf"/>
</dbReference>
<dbReference type="InterPro" id="IPR010193">
    <property type="entry name" value="RsbW"/>
</dbReference>
<dbReference type="NCBIfam" id="NF003144">
    <property type="entry name" value="PRK04069.1"/>
    <property type="match status" value="1"/>
</dbReference>
<dbReference type="NCBIfam" id="TIGR01924">
    <property type="entry name" value="rsbW_low_gc"/>
    <property type="match status" value="1"/>
</dbReference>
<dbReference type="PANTHER" id="PTHR35526">
    <property type="entry name" value="ANTI-SIGMA-F FACTOR RSBW-RELATED"/>
    <property type="match status" value="1"/>
</dbReference>
<dbReference type="PANTHER" id="PTHR35526:SF9">
    <property type="entry name" value="SERINE-PROTEIN KINASE RSBW"/>
    <property type="match status" value="1"/>
</dbReference>
<dbReference type="Pfam" id="PF13581">
    <property type="entry name" value="HATPase_c_2"/>
    <property type="match status" value="1"/>
</dbReference>
<dbReference type="SUPFAM" id="SSF55874">
    <property type="entry name" value="ATPase domain of HSP90 chaperone/DNA topoisomerase II/histidine kinase"/>
    <property type="match status" value="1"/>
</dbReference>
<keyword id="KW-0067">ATP-binding</keyword>
<keyword id="KW-0418">Kinase</keyword>
<keyword id="KW-0547">Nucleotide-binding</keyword>
<keyword id="KW-0723">Serine/threonine-protein kinase</keyword>
<keyword id="KW-0808">Transferase</keyword>
<organism>
    <name type="scientific">Staphylococcus aureus (strain USA300 / TCH1516)</name>
    <dbReference type="NCBI Taxonomy" id="451516"/>
    <lineage>
        <taxon>Bacteria</taxon>
        <taxon>Bacillati</taxon>
        <taxon>Bacillota</taxon>
        <taxon>Bacilli</taxon>
        <taxon>Bacillales</taxon>
        <taxon>Staphylococcaceae</taxon>
        <taxon>Staphylococcus</taxon>
    </lineage>
</organism>